<feature type="chain" id="PRO_1000090432" description="UDP-N-acetylglucosamine--N-acetylmuramyl-(pentapeptide) pyrophosphoryl-undecaprenol N-acetylglucosamine transferase">
    <location>
        <begin position="1"/>
        <end position="352"/>
    </location>
</feature>
<feature type="binding site" evidence="1">
    <location>
        <begin position="13"/>
        <end position="15"/>
    </location>
    <ligand>
        <name>UDP-N-acetyl-alpha-D-glucosamine</name>
        <dbReference type="ChEBI" id="CHEBI:57705"/>
    </ligand>
</feature>
<feature type="binding site" evidence="1">
    <location>
        <position position="125"/>
    </location>
    <ligand>
        <name>UDP-N-acetyl-alpha-D-glucosamine</name>
        <dbReference type="ChEBI" id="CHEBI:57705"/>
    </ligand>
</feature>
<feature type="binding site" evidence="1">
    <location>
        <position position="161"/>
    </location>
    <ligand>
        <name>UDP-N-acetyl-alpha-D-glucosamine</name>
        <dbReference type="ChEBI" id="CHEBI:57705"/>
    </ligand>
</feature>
<feature type="binding site" evidence="1">
    <location>
        <position position="189"/>
    </location>
    <ligand>
        <name>UDP-N-acetyl-alpha-D-glucosamine</name>
        <dbReference type="ChEBI" id="CHEBI:57705"/>
    </ligand>
</feature>
<feature type="binding site" evidence="1">
    <location>
        <position position="242"/>
    </location>
    <ligand>
        <name>UDP-N-acetyl-alpha-D-glucosamine</name>
        <dbReference type="ChEBI" id="CHEBI:57705"/>
    </ligand>
</feature>
<feature type="binding site" evidence="1">
    <location>
        <begin position="261"/>
        <end position="266"/>
    </location>
    <ligand>
        <name>UDP-N-acetyl-alpha-D-glucosamine</name>
        <dbReference type="ChEBI" id="CHEBI:57705"/>
    </ligand>
</feature>
<feature type="binding site" evidence="1">
    <location>
        <position position="286"/>
    </location>
    <ligand>
        <name>UDP-N-acetyl-alpha-D-glucosamine</name>
        <dbReference type="ChEBI" id="CHEBI:57705"/>
    </ligand>
</feature>
<protein>
    <recommendedName>
        <fullName evidence="1">UDP-N-acetylglucosamine--N-acetylmuramyl-(pentapeptide) pyrophosphoryl-undecaprenol N-acetylglucosamine transferase</fullName>
        <ecNumber evidence="1">2.4.1.227</ecNumber>
    </recommendedName>
    <alternativeName>
        <fullName evidence="1">Undecaprenyl-PP-MurNAc-pentapeptide-UDPGlcNAc GlcNAc transferase</fullName>
    </alternativeName>
</protein>
<evidence type="ECO:0000255" key="1">
    <source>
        <dbReference type="HAMAP-Rule" id="MF_00033"/>
    </source>
</evidence>
<reference key="1">
    <citation type="journal article" date="2008" name="Environ. Microbiol.">
        <title>The genome of Erwinia tasmaniensis strain Et1/99, a non-pathogenic bacterium in the genus Erwinia.</title>
        <authorList>
            <person name="Kube M."/>
            <person name="Migdoll A.M."/>
            <person name="Mueller I."/>
            <person name="Kuhl H."/>
            <person name="Beck A."/>
            <person name="Reinhardt R."/>
            <person name="Geider K."/>
        </authorList>
    </citation>
    <scope>NUCLEOTIDE SEQUENCE [LARGE SCALE GENOMIC DNA]</scope>
    <source>
        <strain>DSM 17950 / CFBP 7177 / CIP 109463 / NCPPB 4357 / Et1/99</strain>
    </source>
</reference>
<dbReference type="EC" id="2.4.1.227" evidence="1"/>
<dbReference type="EMBL" id="CU468135">
    <property type="protein sequence ID" value="CAO95801.1"/>
    <property type="molecule type" value="Genomic_DNA"/>
</dbReference>
<dbReference type="RefSeq" id="WP_012440503.1">
    <property type="nucleotide sequence ID" value="NC_010694.1"/>
</dbReference>
<dbReference type="SMR" id="B2VD91"/>
<dbReference type="STRING" id="465817.ETA_07550"/>
<dbReference type="CAZy" id="GT28">
    <property type="family name" value="Glycosyltransferase Family 28"/>
</dbReference>
<dbReference type="KEGG" id="eta:ETA_07550"/>
<dbReference type="eggNOG" id="COG0707">
    <property type="taxonomic scope" value="Bacteria"/>
</dbReference>
<dbReference type="HOGENOM" id="CLU_037404_2_0_6"/>
<dbReference type="OrthoDB" id="9808936at2"/>
<dbReference type="UniPathway" id="UPA00219"/>
<dbReference type="Proteomes" id="UP000001726">
    <property type="component" value="Chromosome"/>
</dbReference>
<dbReference type="GO" id="GO:0005886">
    <property type="term" value="C:plasma membrane"/>
    <property type="evidence" value="ECO:0007669"/>
    <property type="project" value="UniProtKB-SubCell"/>
</dbReference>
<dbReference type="GO" id="GO:0051991">
    <property type="term" value="F:UDP-N-acetyl-D-glucosamine:N-acetylmuramoyl-L-alanyl-D-glutamyl-meso-2,6-diaminopimelyl-D-alanyl-D-alanine-diphosphoundecaprenol 4-beta-N-acetylglucosaminlytransferase activity"/>
    <property type="evidence" value="ECO:0007669"/>
    <property type="project" value="RHEA"/>
</dbReference>
<dbReference type="GO" id="GO:0050511">
    <property type="term" value="F:undecaprenyldiphospho-muramoylpentapeptide beta-N-acetylglucosaminyltransferase activity"/>
    <property type="evidence" value="ECO:0007669"/>
    <property type="project" value="UniProtKB-UniRule"/>
</dbReference>
<dbReference type="GO" id="GO:0005975">
    <property type="term" value="P:carbohydrate metabolic process"/>
    <property type="evidence" value="ECO:0007669"/>
    <property type="project" value="InterPro"/>
</dbReference>
<dbReference type="GO" id="GO:0051301">
    <property type="term" value="P:cell division"/>
    <property type="evidence" value="ECO:0007669"/>
    <property type="project" value="UniProtKB-KW"/>
</dbReference>
<dbReference type="GO" id="GO:0071555">
    <property type="term" value="P:cell wall organization"/>
    <property type="evidence" value="ECO:0007669"/>
    <property type="project" value="UniProtKB-KW"/>
</dbReference>
<dbReference type="GO" id="GO:0030259">
    <property type="term" value="P:lipid glycosylation"/>
    <property type="evidence" value="ECO:0007669"/>
    <property type="project" value="UniProtKB-UniRule"/>
</dbReference>
<dbReference type="GO" id="GO:0009252">
    <property type="term" value="P:peptidoglycan biosynthetic process"/>
    <property type="evidence" value="ECO:0007669"/>
    <property type="project" value="UniProtKB-UniRule"/>
</dbReference>
<dbReference type="GO" id="GO:0008360">
    <property type="term" value="P:regulation of cell shape"/>
    <property type="evidence" value="ECO:0007669"/>
    <property type="project" value="UniProtKB-KW"/>
</dbReference>
<dbReference type="CDD" id="cd03785">
    <property type="entry name" value="GT28_MurG"/>
    <property type="match status" value="1"/>
</dbReference>
<dbReference type="FunFam" id="3.40.50.2000:FF:000016">
    <property type="entry name" value="UDP-N-acetylglucosamine--N-acetylmuramyl-(pentapeptide) pyrophosphoryl-undecaprenol N-acetylglucosamine transferase"/>
    <property type="match status" value="1"/>
</dbReference>
<dbReference type="FunFam" id="3.40.50.2000:FF:000018">
    <property type="entry name" value="UDP-N-acetylglucosamine--N-acetylmuramyl-(pentapeptide) pyrophosphoryl-undecaprenol N-acetylglucosamine transferase"/>
    <property type="match status" value="1"/>
</dbReference>
<dbReference type="Gene3D" id="3.40.50.2000">
    <property type="entry name" value="Glycogen Phosphorylase B"/>
    <property type="match status" value="2"/>
</dbReference>
<dbReference type="HAMAP" id="MF_00033">
    <property type="entry name" value="MurG"/>
    <property type="match status" value="1"/>
</dbReference>
<dbReference type="InterPro" id="IPR006009">
    <property type="entry name" value="GlcNAc_MurG"/>
</dbReference>
<dbReference type="InterPro" id="IPR007235">
    <property type="entry name" value="Glyco_trans_28_C"/>
</dbReference>
<dbReference type="InterPro" id="IPR004276">
    <property type="entry name" value="GlycoTrans_28_N"/>
</dbReference>
<dbReference type="NCBIfam" id="TIGR01133">
    <property type="entry name" value="murG"/>
    <property type="match status" value="1"/>
</dbReference>
<dbReference type="PANTHER" id="PTHR21015:SF22">
    <property type="entry name" value="GLYCOSYLTRANSFERASE"/>
    <property type="match status" value="1"/>
</dbReference>
<dbReference type="PANTHER" id="PTHR21015">
    <property type="entry name" value="UDP-N-ACETYLGLUCOSAMINE--N-ACETYLMURAMYL-(PENTAPEPTIDE) PYROPHOSPHORYL-UNDECAPRENOL N-ACETYLGLUCOSAMINE TRANSFERASE 1"/>
    <property type="match status" value="1"/>
</dbReference>
<dbReference type="Pfam" id="PF04101">
    <property type="entry name" value="Glyco_tran_28_C"/>
    <property type="match status" value="1"/>
</dbReference>
<dbReference type="Pfam" id="PF03033">
    <property type="entry name" value="Glyco_transf_28"/>
    <property type="match status" value="1"/>
</dbReference>
<dbReference type="SUPFAM" id="SSF53756">
    <property type="entry name" value="UDP-Glycosyltransferase/glycogen phosphorylase"/>
    <property type="match status" value="1"/>
</dbReference>
<keyword id="KW-0131">Cell cycle</keyword>
<keyword id="KW-0132">Cell division</keyword>
<keyword id="KW-0997">Cell inner membrane</keyword>
<keyword id="KW-1003">Cell membrane</keyword>
<keyword id="KW-0133">Cell shape</keyword>
<keyword id="KW-0961">Cell wall biogenesis/degradation</keyword>
<keyword id="KW-0328">Glycosyltransferase</keyword>
<keyword id="KW-0472">Membrane</keyword>
<keyword id="KW-0573">Peptidoglycan synthesis</keyword>
<keyword id="KW-1185">Reference proteome</keyword>
<keyword id="KW-0808">Transferase</keyword>
<proteinExistence type="inferred from homology"/>
<gene>
    <name evidence="1" type="primary">murG</name>
    <name type="ordered locus">ETA_07550</name>
</gene>
<name>MURG_ERWT9</name>
<sequence length="352" mass="37485">MSGKRLMVMAGGTGGHVFPGLAVAHHLMAQGWQVRWLGTADRMEADLVPKHGIDIEFIRISGLRGKGIKALLAAPLRIFNAWRQARAIMKAWQPDVVLGMGGYVSGPGGLAAWSCGIPVVLHEQNGIAGLTNKWLAKIATKVMQAFPGAFPDAEVVGNPVRTDVLALPLPSVRLSGRDGPTRVLAIGGSQGARVLNQTMPQVAARLGDSISLWHQVGKGALDEVNADYTRVNQSQHRVSEFIDDMASAYAWADVVVCRSGALTVSEVAAAGLPAIFVPFQHKDRQQYWNALPLEQAGAAVIYEQPQFTADAVAATLAGWDRPTLLAMAEKARAVAIPDATERVAAEVSKAAR</sequence>
<organism>
    <name type="scientific">Erwinia tasmaniensis (strain DSM 17950 / CFBP 7177 / CIP 109463 / NCPPB 4357 / Et1/99)</name>
    <dbReference type="NCBI Taxonomy" id="465817"/>
    <lineage>
        <taxon>Bacteria</taxon>
        <taxon>Pseudomonadati</taxon>
        <taxon>Pseudomonadota</taxon>
        <taxon>Gammaproteobacteria</taxon>
        <taxon>Enterobacterales</taxon>
        <taxon>Erwiniaceae</taxon>
        <taxon>Erwinia</taxon>
    </lineage>
</organism>
<accession>B2VD91</accession>
<comment type="function">
    <text evidence="1">Cell wall formation. Catalyzes the transfer of a GlcNAc subunit on undecaprenyl-pyrophosphoryl-MurNAc-pentapeptide (lipid intermediate I) to form undecaprenyl-pyrophosphoryl-MurNAc-(pentapeptide)GlcNAc (lipid intermediate II).</text>
</comment>
<comment type="catalytic activity">
    <reaction evidence="1">
        <text>di-trans,octa-cis-undecaprenyl diphospho-N-acetyl-alpha-D-muramoyl-L-alanyl-D-glutamyl-meso-2,6-diaminopimeloyl-D-alanyl-D-alanine + UDP-N-acetyl-alpha-D-glucosamine = di-trans,octa-cis-undecaprenyl diphospho-[N-acetyl-alpha-D-glucosaminyl-(1-&gt;4)]-N-acetyl-alpha-D-muramoyl-L-alanyl-D-glutamyl-meso-2,6-diaminopimeloyl-D-alanyl-D-alanine + UDP + H(+)</text>
        <dbReference type="Rhea" id="RHEA:31227"/>
        <dbReference type="ChEBI" id="CHEBI:15378"/>
        <dbReference type="ChEBI" id="CHEBI:57705"/>
        <dbReference type="ChEBI" id="CHEBI:58223"/>
        <dbReference type="ChEBI" id="CHEBI:61387"/>
        <dbReference type="ChEBI" id="CHEBI:61388"/>
        <dbReference type="EC" id="2.4.1.227"/>
    </reaction>
</comment>
<comment type="pathway">
    <text evidence="1">Cell wall biogenesis; peptidoglycan biosynthesis.</text>
</comment>
<comment type="subcellular location">
    <subcellularLocation>
        <location evidence="1">Cell inner membrane</location>
        <topology evidence="1">Peripheral membrane protein</topology>
        <orientation evidence="1">Cytoplasmic side</orientation>
    </subcellularLocation>
</comment>
<comment type="similarity">
    <text evidence="1">Belongs to the glycosyltransferase 28 family. MurG subfamily.</text>
</comment>